<keyword id="KW-0227">DNA damage</keyword>
<keyword id="KW-0234">DNA repair</keyword>
<keyword id="KW-0238">DNA-binding</keyword>
<keyword id="KW-0378">Hydrolase</keyword>
<keyword id="KW-1185">Reference proteome</keyword>
<name>UNG_VAR67</name>
<comment type="function">
    <text evidence="1">Plays an essential role in viral replication as a component of the DNA polymerase processivity factor. Excises uracil residues from the DNA which can arise as a result of misincorporation of dUMP residues by DNA polymerase or due to deamination of cytosine.</text>
</comment>
<comment type="catalytic activity">
    <reaction evidence="1">
        <text>Hydrolyzes single-stranded DNA or mismatched double-stranded DNA and polynucleotides, releasing free uracil.</text>
        <dbReference type="EC" id="3.2.2.27"/>
    </reaction>
</comment>
<comment type="subunit">
    <text evidence="1">Homodimer. Interacts with protein OPG148. Component of the Uracil-DNA glycosylase(UDG)-OPG148-polymerase complex; OPG148 and UDG form a heterodimeric processivity factor that associates with OPG71 to form the processive polymerase holoenzyme.</text>
</comment>
<comment type="similarity">
    <text evidence="3">Belongs to the uracil-DNA glycosylase (UDG) superfamily. UNG family.</text>
</comment>
<protein>
    <recommendedName>
        <fullName>Uracil-DNA glycosylase</fullName>
        <shortName>UDG</shortName>
        <ecNumber evidence="1">3.2.2.27</ecNumber>
    </recommendedName>
</protein>
<evidence type="ECO:0000250" key="1">
    <source>
        <dbReference type="UniProtKB" id="P04303"/>
    </source>
</evidence>
<evidence type="ECO:0000255" key="2">
    <source>
        <dbReference type="PROSITE-ProRule" id="PRU10072"/>
    </source>
</evidence>
<evidence type="ECO:0000305" key="3"/>
<sequence>MNSVTVSHAPYTITYHDDWEPVMNQLVEFYNEVASWLLRDETSPIPDKFFIQLKQPLRNKRVCVCGIDPYPKDGTGVPFESPNFTKKSIKEIASSISRLTGVIDYKGYNLNIIDGVIPWNYYLSCKLGETKSHAIYWDKISKLLLHHITKHVRFLYCLGKTDFSNIRAKLESPVTTIVGYHPAARDRQFEKDRSFEIINVLLELDNKAPINWAQGFIY</sequence>
<reference key="1">
    <citation type="journal article" date="1993" name="Virus Res.">
        <title>Nucleotide sequence analysis of variola virus HindIII M, L, I genome fragments.</title>
        <authorList>
            <person name="Shchelkunov S.N."/>
            <person name="Blinov V.M."/>
            <person name="Totmenin A.V."/>
            <person name="Marennikova S.S."/>
            <person name="Kolykhalov A.A."/>
            <person name="Frolov I.V."/>
            <person name="Chizhikov V.E."/>
            <person name="Gytorov V.V."/>
            <person name="Gashikov P.V."/>
            <person name="Belanov E.F."/>
            <person name="Belavin P.A."/>
            <person name="Resenchuk S.M."/>
            <person name="Andzhaparidze O.G."/>
            <person name="Sandakhchiev L.S."/>
        </authorList>
    </citation>
    <scope>NUCLEOTIDE SEQUENCE [GENOMIC DNA]</scope>
</reference>
<reference key="2">
    <citation type="journal article" date="1993" name="FEBS Lett.">
        <title>Genes of variola and vaccinia viruses necessary to overcome the host protective mechanisms.</title>
        <authorList>
            <person name="Shchelkunov S.N."/>
            <person name="Blinov V.M."/>
            <person name="Sandakhchiev L.S."/>
        </authorList>
    </citation>
    <scope>NUCLEOTIDE SEQUENCE [LARGE SCALE GENOMIC DNA]</scope>
</reference>
<proteinExistence type="inferred from homology"/>
<organismHost>
    <name type="scientific">Homo sapiens</name>
    <name type="common">Human</name>
    <dbReference type="NCBI Taxonomy" id="9606"/>
</organismHost>
<organism>
    <name type="scientific">Variola virus (isolate Human/India/Ind3/1967)</name>
    <name type="common">VARV</name>
    <name type="synonym">Smallpox virus</name>
    <dbReference type="NCBI Taxonomy" id="587200"/>
    <lineage>
        <taxon>Viruses</taxon>
        <taxon>Varidnaviria</taxon>
        <taxon>Bamfordvirae</taxon>
        <taxon>Nucleocytoviricota</taxon>
        <taxon>Pokkesviricetes</taxon>
        <taxon>Chitovirales</taxon>
        <taxon>Poxviridae</taxon>
        <taxon>Chordopoxvirinae</taxon>
        <taxon>Orthopoxvirus</taxon>
        <taxon>Variola virus</taxon>
    </lineage>
</organism>
<dbReference type="EC" id="3.2.2.27" evidence="1"/>
<dbReference type="EMBL" id="X67119">
    <property type="protein sequence ID" value="CAA47593.1"/>
    <property type="molecule type" value="Genomic_DNA"/>
</dbReference>
<dbReference type="EMBL" id="X69198">
    <property type="protein sequence ID" value="CAA49035.1"/>
    <property type="molecule type" value="Genomic_DNA"/>
</dbReference>
<dbReference type="PIR" id="A36847">
    <property type="entry name" value="A36847"/>
</dbReference>
<dbReference type="RefSeq" id="NP_042138.1">
    <property type="nucleotide sequence ID" value="NC_001611.1"/>
</dbReference>
<dbReference type="SMR" id="P0DSP7"/>
<dbReference type="GeneID" id="1486420"/>
<dbReference type="KEGG" id="vg:1486420"/>
<dbReference type="Proteomes" id="UP000002060">
    <property type="component" value="Segment"/>
</dbReference>
<dbReference type="GO" id="GO:0003677">
    <property type="term" value="F:DNA binding"/>
    <property type="evidence" value="ECO:0007669"/>
    <property type="project" value="UniProtKB-KW"/>
</dbReference>
<dbReference type="GO" id="GO:0004844">
    <property type="term" value="F:uracil DNA N-glycosylase activity"/>
    <property type="evidence" value="ECO:0007669"/>
    <property type="project" value="UniProtKB-EC"/>
</dbReference>
<dbReference type="GO" id="GO:0006281">
    <property type="term" value="P:DNA repair"/>
    <property type="evidence" value="ECO:0007669"/>
    <property type="project" value="UniProtKB-KW"/>
</dbReference>
<dbReference type="CDD" id="cd19372">
    <property type="entry name" value="UDG_F1_VAVC_D4-like"/>
    <property type="match status" value="1"/>
</dbReference>
<dbReference type="Gene3D" id="3.40.470.10">
    <property type="entry name" value="Uracil-DNA glycosylase-like domain"/>
    <property type="match status" value="1"/>
</dbReference>
<dbReference type="InterPro" id="IPR018085">
    <property type="entry name" value="Ura-DNA_Glyclase_AS"/>
</dbReference>
<dbReference type="InterPro" id="IPR036895">
    <property type="entry name" value="Uracil-DNA_glycosylase-like_sf"/>
</dbReference>
<dbReference type="SUPFAM" id="SSF52141">
    <property type="entry name" value="Uracil-DNA glycosylase-like"/>
    <property type="match status" value="1"/>
</dbReference>
<dbReference type="PROSITE" id="PS00130">
    <property type="entry name" value="U_DNA_GLYCOSYLASE"/>
    <property type="match status" value="1"/>
</dbReference>
<accession>P0DSP7</accession>
<accession>P32988</accession>
<feature type="chain" id="PRO_0000176182" description="Uracil-DNA glycosylase">
    <location>
        <begin position="1"/>
        <end position="218"/>
    </location>
</feature>
<feature type="active site" description="Proton acceptor" evidence="2">
    <location>
        <position position="68"/>
    </location>
</feature>
<gene>
    <name type="primary">OPG116</name>
    <name type="synonym">UNG</name>
    <name type="ORF">D4R</name>
    <name type="ORF">F4R</name>
</gene>